<dbReference type="EMBL" id="CP000474">
    <property type="status" value="NOT_ANNOTATED_CDS"/>
    <property type="molecule type" value="Genomic_DNA"/>
</dbReference>
<dbReference type="RefSeq" id="WP_043806102.1">
    <property type="nucleotide sequence ID" value="NC_008711.1"/>
</dbReference>
<dbReference type="SMR" id="P0CG90"/>
<dbReference type="OrthoDB" id="3254977at2"/>
<dbReference type="UniPathway" id="UPA00997"/>
<dbReference type="Proteomes" id="UP000000637">
    <property type="component" value="Chromosome"/>
</dbReference>
<dbReference type="GO" id="GO:0070628">
    <property type="term" value="F:proteasome binding"/>
    <property type="evidence" value="ECO:0007669"/>
    <property type="project" value="UniProtKB-UniRule"/>
</dbReference>
<dbReference type="GO" id="GO:0031386">
    <property type="term" value="F:protein tag activity"/>
    <property type="evidence" value="ECO:0007669"/>
    <property type="project" value="UniProtKB-UniRule"/>
</dbReference>
<dbReference type="GO" id="GO:0019941">
    <property type="term" value="P:modification-dependent protein catabolic process"/>
    <property type="evidence" value="ECO:0007669"/>
    <property type="project" value="UniProtKB-UniRule"/>
</dbReference>
<dbReference type="GO" id="GO:0010498">
    <property type="term" value="P:proteasomal protein catabolic process"/>
    <property type="evidence" value="ECO:0007669"/>
    <property type="project" value="UniProtKB-UniRule"/>
</dbReference>
<dbReference type="GO" id="GO:0070490">
    <property type="term" value="P:protein pupylation"/>
    <property type="evidence" value="ECO:0007669"/>
    <property type="project" value="UniProtKB-UniRule"/>
</dbReference>
<dbReference type="HAMAP" id="MF_02106">
    <property type="entry name" value="Pup"/>
    <property type="match status" value="1"/>
</dbReference>
<dbReference type="InterPro" id="IPR008515">
    <property type="entry name" value="Ubiquitin-like_Pup"/>
</dbReference>
<dbReference type="NCBIfam" id="TIGR03687">
    <property type="entry name" value="pupylate_cterm"/>
    <property type="match status" value="1"/>
</dbReference>
<dbReference type="Pfam" id="PF05639">
    <property type="entry name" value="Pup"/>
    <property type="match status" value="1"/>
</dbReference>
<evidence type="ECO:0000250" key="1"/>
<evidence type="ECO:0000255" key="2"/>
<evidence type="ECO:0000256" key="3">
    <source>
        <dbReference type="SAM" id="MobiDB-lite"/>
    </source>
</evidence>
<evidence type="ECO:0000305" key="4"/>
<organism>
    <name type="scientific">Paenarthrobacter aurescens (strain TC1)</name>
    <dbReference type="NCBI Taxonomy" id="290340"/>
    <lineage>
        <taxon>Bacteria</taxon>
        <taxon>Bacillati</taxon>
        <taxon>Actinomycetota</taxon>
        <taxon>Actinomycetes</taxon>
        <taxon>Micrococcales</taxon>
        <taxon>Micrococcaceae</taxon>
        <taxon>Paenarthrobacter</taxon>
    </lineage>
</organism>
<sequence length="67" mass="7184">MAAQEQQQPQSRETETEVDVPEAPPAAPEAQASEATQGVDDLLDEIDGVLESNAEEFVRAFVQKGGQ</sequence>
<reference key="1">
    <citation type="journal article" date="2006" name="PLoS Genet.">
        <title>Secrets of soil survival revealed by the genome sequence of Arthrobacter aurescens TC1.</title>
        <authorList>
            <person name="Mongodin E.F."/>
            <person name="Shapir N."/>
            <person name="Daugherty S.C."/>
            <person name="DeBoy R.T."/>
            <person name="Emerson J.B."/>
            <person name="Shvartzbeyn A."/>
            <person name="Radune D."/>
            <person name="Vamathevan J."/>
            <person name="Riggs F."/>
            <person name="Grinberg V."/>
            <person name="Khouri H.M."/>
            <person name="Wackett L.P."/>
            <person name="Nelson K.E."/>
            <person name="Sadowsky M.J."/>
        </authorList>
    </citation>
    <scope>NUCLEOTIDE SEQUENCE [LARGE SCALE GENOMIC DNA]</scope>
    <source>
        <strain>TC1</strain>
    </source>
</reference>
<name>PUP_PAEAT</name>
<keyword id="KW-0175">Coiled coil</keyword>
<keyword id="KW-1017">Isopeptide bond</keyword>
<keyword id="KW-0833">Ubl conjugation pathway</keyword>
<proteinExistence type="inferred from homology"/>
<accession>P0CG90</accession>
<gene>
    <name type="primary">pup</name>
    <name type="ordered locus">AAur_2176.1</name>
</gene>
<comment type="function">
    <text evidence="1">Protein modifier that is covalently attached to lysine residues of substrate proteins, thereby targeting them for proteasomal degradation. The tagging system is termed pupylation (By similarity).</text>
</comment>
<comment type="pathway">
    <text>Protein degradation; proteasomal Pup-dependent pathway.</text>
</comment>
<comment type="subunit">
    <text evidence="1">Strongly interacts with the proteasome-associated ATPase ARC through a hydrophobic interface; the interacting region of Pup lies in its C-terminal half. There is one Pup binding site per ARC hexamer ring (By similarity).</text>
</comment>
<comment type="domain">
    <text evidence="1">The N-terminal unstructured half of Pup provides a signal required to initiate unfolding and degradation by the proteasome but is not needed for pupylation, while the C-terminal helical half of Pup interacts with ARC to target proteins to the proteasome.</text>
</comment>
<comment type="PTM">
    <text evidence="1">Is modified by deamidation of its C-terminal glutamine to glutamate by the deamidase Dop, a prerequisite to the subsequent pupylation process.</text>
</comment>
<comment type="similarity">
    <text evidence="4">Belongs to the prokaryotic ubiquitin-like protein family.</text>
</comment>
<protein>
    <recommendedName>
        <fullName>Prokaryotic ubiquitin-like protein Pup</fullName>
    </recommendedName>
    <alternativeName>
        <fullName>Bacterial ubiquitin-like modifier</fullName>
    </alternativeName>
</protein>
<feature type="chain" id="PRO_0000395994" description="Prokaryotic ubiquitin-like protein Pup">
    <location>
        <begin position="1"/>
        <end position="67"/>
    </location>
</feature>
<feature type="region of interest" description="Disordered" evidence="3">
    <location>
        <begin position="1"/>
        <end position="38"/>
    </location>
</feature>
<feature type="region of interest" description="ARC ATPase binding" evidence="1">
    <location>
        <begin position="25"/>
        <end position="61"/>
    </location>
</feature>
<feature type="coiled-coil region" evidence="2">
    <location>
        <begin position="29"/>
        <end position="49"/>
    </location>
</feature>
<feature type="compositionally biased region" description="Polar residues" evidence="3">
    <location>
        <begin position="1"/>
        <end position="11"/>
    </location>
</feature>
<feature type="compositionally biased region" description="Low complexity" evidence="3">
    <location>
        <begin position="28"/>
        <end position="37"/>
    </location>
</feature>
<feature type="modified residue" description="Deamidated glutamine" evidence="1">
    <location>
        <position position="67"/>
    </location>
</feature>
<feature type="cross-link" description="Isoglutamyl lysine isopeptide (Gln-Lys) (interchain with K-? in acceptor proteins)" evidence="1">
    <location>
        <position position="67"/>
    </location>
</feature>